<proteinExistence type="inferred from homology"/>
<keyword id="KW-0963">Cytoplasm</keyword>
<keyword id="KW-0456">Lyase</keyword>
<keyword id="KW-1185">Reference proteome</keyword>
<keyword id="KW-0816">Tricarboxylic acid cycle</keyword>
<name>FUMC_ECOL6</name>
<feature type="chain" id="PRO_0000161277" description="Fumarate hydratase class II">
    <location>
        <begin position="1"/>
        <end position="467"/>
    </location>
</feature>
<feature type="active site" description="Proton donor/acceptor" evidence="1">
    <location>
        <position position="188"/>
    </location>
</feature>
<feature type="active site" evidence="1">
    <location>
        <position position="318"/>
    </location>
</feature>
<feature type="binding site" evidence="1">
    <location>
        <begin position="98"/>
        <end position="100"/>
    </location>
    <ligand>
        <name>substrate</name>
    </ligand>
</feature>
<feature type="binding site" evidence="1">
    <location>
        <position position="126"/>
    </location>
    <ligand>
        <name>substrate</name>
    </ligand>
</feature>
<feature type="binding site" description="in site B" evidence="1">
    <location>
        <begin position="129"/>
        <end position="132"/>
    </location>
    <ligand>
        <name>substrate</name>
    </ligand>
</feature>
<feature type="binding site" evidence="1">
    <location>
        <begin position="139"/>
        <end position="141"/>
    </location>
    <ligand>
        <name>substrate</name>
    </ligand>
</feature>
<feature type="binding site" evidence="1">
    <location>
        <position position="187"/>
    </location>
    <ligand>
        <name>substrate</name>
    </ligand>
</feature>
<feature type="binding site" evidence="1">
    <location>
        <position position="319"/>
    </location>
    <ligand>
        <name>substrate</name>
    </ligand>
</feature>
<feature type="binding site" evidence="1">
    <location>
        <begin position="324"/>
        <end position="326"/>
    </location>
    <ligand>
        <name>substrate</name>
    </ligand>
</feature>
<feature type="site" description="Important for catalytic activity" evidence="1">
    <location>
        <position position="331"/>
    </location>
</feature>
<gene>
    <name evidence="1" type="primary">fumC</name>
    <name type="ordered locus">c2003</name>
</gene>
<protein>
    <recommendedName>
        <fullName evidence="1">Fumarate hydratase class II</fullName>
        <shortName evidence="1">Fumarase C</shortName>
        <ecNumber evidence="1">4.2.1.2</ecNumber>
    </recommendedName>
    <alternativeName>
        <fullName evidence="1">Aerobic fumarase</fullName>
    </alternativeName>
    <alternativeName>
        <fullName evidence="1">Iron-independent fumarase</fullName>
    </alternativeName>
</protein>
<organism>
    <name type="scientific">Escherichia coli O6:H1 (strain CFT073 / ATCC 700928 / UPEC)</name>
    <dbReference type="NCBI Taxonomy" id="199310"/>
    <lineage>
        <taxon>Bacteria</taxon>
        <taxon>Pseudomonadati</taxon>
        <taxon>Pseudomonadota</taxon>
        <taxon>Gammaproteobacteria</taxon>
        <taxon>Enterobacterales</taxon>
        <taxon>Enterobacteriaceae</taxon>
        <taxon>Escherichia</taxon>
    </lineage>
</organism>
<accession>Q8FHA7</accession>
<reference key="1">
    <citation type="journal article" date="2002" name="Proc. Natl. Acad. Sci. U.S.A.">
        <title>Extensive mosaic structure revealed by the complete genome sequence of uropathogenic Escherichia coli.</title>
        <authorList>
            <person name="Welch R.A."/>
            <person name="Burland V."/>
            <person name="Plunkett G. III"/>
            <person name="Redford P."/>
            <person name="Roesch P."/>
            <person name="Rasko D."/>
            <person name="Buckles E.L."/>
            <person name="Liou S.-R."/>
            <person name="Boutin A."/>
            <person name="Hackett J."/>
            <person name="Stroud D."/>
            <person name="Mayhew G.F."/>
            <person name="Rose D.J."/>
            <person name="Zhou S."/>
            <person name="Schwartz D.C."/>
            <person name="Perna N.T."/>
            <person name="Mobley H.L.T."/>
            <person name="Donnenberg M.S."/>
            <person name="Blattner F.R."/>
        </authorList>
    </citation>
    <scope>NUCLEOTIDE SEQUENCE [LARGE SCALE GENOMIC DNA]</scope>
    <source>
        <strain>CFT073 / ATCC 700928 / UPEC</strain>
    </source>
</reference>
<dbReference type="EC" id="4.2.1.2" evidence="1"/>
<dbReference type="EMBL" id="AE014075">
    <property type="protein sequence ID" value="AAN80463.1"/>
    <property type="molecule type" value="Genomic_DNA"/>
</dbReference>
<dbReference type="RefSeq" id="WP_001099099.1">
    <property type="nucleotide sequence ID" value="NZ_CP051263.1"/>
</dbReference>
<dbReference type="SMR" id="Q8FHA7"/>
<dbReference type="STRING" id="199310.c2003"/>
<dbReference type="KEGG" id="ecc:c2003"/>
<dbReference type="eggNOG" id="COG0114">
    <property type="taxonomic scope" value="Bacteria"/>
</dbReference>
<dbReference type="HOGENOM" id="CLU_021594_4_1_6"/>
<dbReference type="BioCyc" id="ECOL199310:C2003-MONOMER"/>
<dbReference type="SABIO-RK" id="Q8FHA7"/>
<dbReference type="UniPathway" id="UPA00223">
    <property type="reaction ID" value="UER01007"/>
</dbReference>
<dbReference type="Proteomes" id="UP000001410">
    <property type="component" value="Chromosome"/>
</dbReference>
<dbReference type="GO" id="GO:0005737">
    <property type="term" value="C:cytoplasm"/>
    <property type="evidence" value="ECO:0007669"/>
    <property type="project" value="UniProtKB-SubCell"/>
</dbReference>
<dbReference type="GO" id="GO:0004333">
    <property type="term" value="F:fumarate hydratase activity"/>
    <property type="evidence" value="ECO:0007669"/>
    <property type="project" value="UniProtKB-UniRule"/>
</dbReference>
<dbReference type="GO" id="GO:0006106">
    <property type="term" value="P:fumarate metabolic process"/>
    <property type="evidence" value="ECO:0007669"/>
    <property type="project" value="InterPro"/>
</dbReference>
<dbReference type="GO" id="GO:0006108">
    <property type="term" value="P:malate metabolic process"/>
    <property type="evidence" value="ECO:0007669"/>
    <property type="project" value="TreeGrafter"/>
</dbReference>
<dbReference type="GO" id="GO:0006099">
    <property type="term" value="P:tricarboxylic acid cycle"/>
    <property type="evidence" value="ECO:0007669"/>
    <property type="project" value="UniProtKB-UniRule"/>
</dbReference>
<dbReference type="CDD" id="cd01362">
    <property type="entry name" value="Fumarase_classII"/>
    <property type="match status" value="1"/>
</dbReference>
<dbReference type="FunFam" id="1.10.40.30:FF:000002">
    <property type="entry name" value="Fumarate hydratase class II"/>
    <property type="match status" value="1"/>
</dbReference>
<dbReference type="FunFam" id="1.10.275.10:FF:000001">
    <property type="entry name" value="Fumarate hydratase, mitochondrial"/>
    <property type="match status" value="1"/>
</dbReference>
<dbReference type="FunFam" id="1.20.200.10:FF:000001">
    <property type="entry name" value="Fumarate hydratase, mitochondrial"/>
    <property type="match status" value="1"/>
</dbReference>
<dbReference type="Gene3D" id="1.10.40.30">
    <property type="entry name" value="Fumarase/aspartase (C-terminal domain)"/>
    <property type="match status" value="1"/>
</dbReference>
<dbReference type="Gene3D" id="1.20.200.10">
    <property type="entry name" value="Fumarase/aspartase (Central domain)"/>
    <property type="match status" value="1"/>
</dbReference>
<dbReference type="Gene3D" id="1.10.275.10">
    <property type="entry name" value="Fumarase/aspartase (N-terminal domain)"/>
    <property type="match status" value="1"/>
</dbReference>
<dbReference type="HAMAP" id="MF_00743">
    <property type="entry name" value="FumaraseC"/>
    <property type="match status" value="1"/>
</dbReference>
<dbReference type="InterPro" id="IPR005677">
    <property type="entry name" value="Fum_hydII"/>
</dbReference>
<dbReference type="InterPro" id="IPR024083">
    <property type="entry name" value="Fumarase/histidase_N"/>
</dbReference>
<dbReference type="InterPro" id="IPR018951">
    <property type="entry name" value="Fumarase_C_C"/>
</dbReference>
<dbReference type="InterPro" id="IPR020557">
    <property type="entry name" value="Fumarate_lyase_CS"/>
</dbReference>
<dbReference type="InterPro" id="IPR000362">
    <property type="entry name" value="Fumarate_lyase_fam"/>
</dbReference>
<dbReference type="InterPro" id="IPR022761">
    <property type="entry name" value="Fumarate_lyase_N"/>
</dbReference>
<dbReference type="InterPro" id="IPR008948">
    <property type="entry name" value="L-Aspartase-like"/>
</dbReference>
<dbReference type="NCBIfam" id="TIGR00979">
    <property type="entry name" value="fumC_II"/>
    <property type="match status" value="1"/>
</dbReference>
<dbReference type="NCBIfam" id="NF008909">
    <property type="entry name" value="PRK12273.1"/>
    <property type="match status" value="1"/>
</dbReference>
<dbReference type="PANTHER" id="PTHR11444">
    <property type="entry name" value="ASPARTATEAMMONIA/ARGININOSUCCINATE/ADENYLOSUCCINATE LYASE"/>
    <property type="match status" value="1"/>
</dbReference>
<dbReference type="PANTHER" id="PTHR11444:SF1">
    <property type="entry name" value="FUMARATE HYDRATASE, MITOCHONDRIAL"/>
    <property type="match status" value="1"/>
</dbReference>
<dbReference type="Pfam" id="PF10415">
    <property type="entry name" value="FumaraseC_C"/>
    <property type="match status" value="1"/>
</dbReference>
<dbReference type="Pfam" id="PF00206">
    <property type="entry name" value="Lyase_1"/>
    <property type="match status" value="1"/>
</dbReference>
<dbReference type="PRINTS" id="PR00149">
    <property type="entry name" value="FUMRATELYASE"/>
</dbReference>
<dbReference type="SUPFAM" id="SSF48557">
    <property type="entry name" value="L-aspartase-like"/>
    <property type="match status" value="1"/>
</dbReference>
<dbReference type="PROSITE" id="PS00163">
    <property type="entry name" value="FUMARATE_LYASES"/>
    <property type="match status" value="1"/>
</dbReference>
<evidence type="ECO:0000255" key="1">
    <source>
        <dbReference type="HAMAP-Rule" id="MF_00743"/>
    </source>
</evidence>
<comment type="function">
    <text evidence="1">Involved in the TCA cycle. Catalyzes the stereospecific interconversion of fumarate to L-malate.</text>
</comment>
<comment type="catalytic activity">
    <reaction evidence="1">
        <text>(S)-malate = fumarate + H2O</text>
        <dbReference type="Rhea" id="RHEA:12460"/>
        <dbReference type="ChEBI" id="CHEBI:15377"/>
        <dbReference type="ChEBI" id="CHEBI:15589"/>
        <dbReference type="ChEBI" id="CHEBI:29806"/>
        <dbReference type="EC" id="4.2.1.2"/>
    </reaction>
</comment>
<comment type="pathway">
    <text evidence="1">Carbohydrate metabolism; tricarboxylic acid cycle; (S)-malate from fumarate: step 1/1.</text>
</comment>
<comment type="subunit">
    <text evidence="1">Homotetramer.</text>
</comment>
<comment type="subcellular location">
    <subcellularLocation>
        <location evidence="1">Cytoplasm</location>
    </subcellularLocation>
</comment>
<comment type="miscellaneous">
    <text evidence="1">There are 2 substrate-binding sites: the catalytic A site, and the non-catalytic B site that may play a role in the transfer of substrate or product between the active site and the solvent. Alternatively, the B site may bind allosteric effectors.</text>
</comment>
<comment type="similarity">
    <text evidence="1">Belongs to the class-II fumarase/aspartase family. Fumarase subfamily.</text>
</comment>
<sequence length="467" mass="50432">MNTVRSEKDSMGAIDVPADKLWGAQTQRSLEHFRISTEKMPTSLIHALALTKRAAAKVNEDLGLLSEEKASAIRQAADEVLAGQHDDEFPLAIWQTGSGTQSNMNMNEVLANRASELLGGVRGMERKVHPNDDVNKSQSSNDVFPTAMHVAALLALRKQLIPQLKTLTQTLSEKSRAFADIVKIGRTHLQDATPLTLGQEISGWVAMLEHNLKHIEYSLPHVAELALGGTAVGTGLNTHPEYARRVADELAVITCAPFVTAPNKFEALATCDALVQAHGALKGLAASLMKIANDVRWLASGPRCGIGEISIPENEPGSSIMPGKVNPTQCEALTMLCCQVMGNDVAINMGGASGNFELNVFRPMVIHNFLQSVRLLADGMESFNKHCAVGIEPNRERINQLLNESLMLVTALNTHIGYDKAAEIAKKAHKEGLTLKAAALALGYLSEAEFDRWVRPEQMVGSMKAGG</sequence>